<comment type="function">
    <text evidence="1">Cell wall formation. Catalyzes the addition of glutamate to the nucleotide precursor UDP-N-acetylmuramoyl-L-alanine (UMA).</text>
</comment>
<comment type="catalytic activity">
    <reaction evidence="1">
        <text>UDP-N-acetyl-alpha-D-muramoyl-L-alanine + D-glutamate + ATP = UDP-N-acetyl-alpha-D-muramoyl-L-alanyl-D-glutamate + ADP + phosphate + H(+)</text>
        <dbReference type="Rhea" id="RHEA:16429"/>
        <dbReference type="ChEBI" id="CHEBI:15378"/>
        <dbReference type="ChEBI" id="CHEBI:29986"/>
        <dbReference type="ChEBI" id="CHEBI:30616"/>
        <dbReference type="ChEBI" id="CHEBI:43474"/>
        <dbReference type="ChEBI" id="CHEBI:83898"/>
        <dbReference type="ChEBI" id="CHEBI:83900"/>
        <dbReference type="ChEBI" id="CHEBI:456216"/>
        <dbReference type="EC" id="6.3.2.9"/>
    </reaction>
</comment>
<comment type="pathway">
    <text evidence="1">Cell wall biogenesis; peptidoglycan biosynthesis.</text>
</comment>
<comment type="subcellular location">
    <subcellularLocation>
        <location evidence="1">Cytoplasm</location>
    </subcellularLocation>
</comment>
<comment type="similarity">
    <text evidence="1">Belongs to the MurCDEF family.</text>
</comment>
<keyword id="KW-0067">ATP-binding</keyword>
<keyword id="KW-0131">Cell cycle</keyword>
<keyword id="KW-0132">Cell division</keyword>
<keyword id="KW-0133">Cell shape</keyword>
<keyword id="KW-0961">Cell wall biogenesis/degradation</keyword>
<keyword id="KW-0963">Cytoplasm</keyword>
<keyword id="KW-0436">Ligase</keyword>
<keyword id="KW-0547">Nucleotide-binding</keyword>
<keyword id="KW-0573">Peptidoglycan synthesis</keyword>
<keyword id="KW-1185">Reference proteome</keyword>
<dbReference type="EC" id="6.3.2.9" evidence="1"/>
<dbReference type="EMBL" id="CP000698">
    <property type="protein sequence ID" value="ABQ28120.1"/>
    <property type="molecule type" value="Genomic_DNA"/>
</dbReference>
<dbReference type="RefSeq" id="WP_011940757.1">
    <property type="nucleotide sequence ID" value="NC_009483.1"/>
</dbReference>
<dbReference type="SMR" id="A5G8K2"/>
<dbReference type="STRING" id="351605.Gura_3976"/>
<dbReference type="KEGG" id="gur:Gura_3976"/>
<dbReference type="HOGENOM" id="CLU_032540_0_0_7"/>
<dbReference type="OrthoDB" id="9809796at2"/>
<dbReference type="UniPathway" id="UPA00219"/>
<dbReference type="Proteomes" id="UP000006695">
    <property type="component" value="Chromosome"/>
</dbReference>
<dbReference type="GO" id="GO:0005737">
    <property type="term" value="C:cytoplasm"/>
    <property type="evidence" value="ECO:0007669"/>
    <property type="project" value="UniProtKB-SubCell"/>
</dbReference>
<dbReference type="GO" id="GO:0005524">
    <property type="term" value="F:ATP binding"/>
    <property type="evidence" value="ECO:0007669"/>
    <property type="project" value="UniProtKB-UniRule"/>
</dbReference>
<dbReference type="GO" id="GO:0008764">
    <property type="term" value="F:UDP-N-acetylmuramoylalanine-D-glutamate ligase activity"/>
    <property type="evidence" value="ECO:0007669"/>
    <property type="project" value="UniProtKB-UniRule"/>
</dbReference>
<dbReference type="GO" id="GO:0051301">
    <property type="term" value="P:cell division"/>
    <property type="evidence" value="ECO:0007669"/>
    <property type="project" value="UniProtKB-KW"/>
</dbReference>
<dbReference type="GO" id="GO:0071555">
    <property type="term" value="P:cell wall organization"/>
    <property type="evidence" value="ECO:0007669"/>
    <property type="project" value="UniProtKB-KW"/>
</dbReference>
<dbReference type="GO" id="GO:0009252">
    <property type="term" value="P:peptidoglycan biosynthetic process"/>
    <property type="evidence" value="ECO:0007669"/>
    <property type="project" value="UniProtKB-UniRule"/>
</dbReference>
<dbReference type="GO" id="GO:0008360">
    <property type="term" value="P:regulation of cell shape"/>
    <property type="evidence" value="ECO:0007669"/>
    <property type="project" value="UniProtKB-KW"/>
</dbReference>
<dbReference type="Gene3D" id="3.90.190.20">
    <property type="entry name" value="Mur ligase, C-terminal domain"/>
    <property type="match status" value="1"/>
</dbReference>
<dbReference type="Gene3D" id="3.40.1190.10">
    <property type="entry name" value="Mur-like, catalytic domain"/>
    <property type="match status" value="1"/>
</dbReference>
<dbReference type="Gene3D" id="3.40.50.720">
    <property type="entry name" value="NAD(P)-binding Rossmann-like Domain"/>
    <property type="match status" value="1"/>
</dbReference>
<dbReference type="HAMAP" id="MF_00639">
    <property type="entry name" value="MurD"/>
    <property type="match status" value="1"/>
</dbReference>
<dbReference type="InterPro" id="IPR036565">
    <property type="entry name" value="Mur-like_cat_sf"/>
</dbReference>
<dbReference type="InterPro" id="IPR004101">
    <property type="entry name" value="Mur_ligase_C"/>
</dbReference>
<dbReference type="InterPro" id="IPR036615">
    <property type="entry name" value="Mur_ligase_C_dom_sf"/>
</dbReference>
<dbReference type="InterPro" id="IPR013221">
    <property type="entry name" value="Mur_ligase_cen"/>
</dbReference>
<dbReference type="InterPro" id="IPR005762">
    <property type="entry name" value="MurD"/>
</dbReference>
<dbReference type="NCBIfam" id="TIGR01087">
    <property type="entry name" value="murD"/>
    <property type="match status" value="1"/>
</dbReference>
<dbReference type="PANTHER" id="PTHR43692">
    <property type="entry name" value="UDP-N-ACETYLMURAMOYLALANINE--D-GLUTAMATE LIGASE"/>
    <property type="match status" value="1"/>
</dbReference>
<dbReference type="PANTHER" id="PTHR43692:SF1">
    <property type="entry name" value="UDP-N-ACETYLMURAMOYLALANINE--D-GLUTAMATE LIGASE"/>
    <property type="match status" value="1"/>
</dbReference>
<dbReference type="Pfam" id="PF02875">
    <property type="entry name" value="Mur_ligase_C"/>
    <property type="match status" value="1"/>
</dbReference>
<dbReference type="Pfam" id="PF08245">
    <property type="entry name" value="Mur_ligase_M"/>
    <property type="match status" value="1"/>
</dbReference>
<dbReference type="Pfam" id="PF21799">
    <property type="entry name" value="MurD-like_N"/>
    <property type="match status" value="1"/>
</dbReference>
<dbReference type="SUPFAM" id="SSF51984">
    <property type="entry name" value="MurCD N-terminal domain"/>
    <property type="match status" value="1"/>
</dbReference>
<dbReference type="SUPFAM" id="SSF53623">
    <property type="entry name" value="MurD-like peptide ligases, catalytic domain"/>
    <property type="match status" value="1"/>
</dbReference>
<dbReference type="SUPFAM" id="SSF53244">
    <property type="entry name" value="MurD-like peptide ligases, peptide-binding domain"/>
    <property type="match status" value="1"/>
</dbReference>
<organism>
    <name type="scientific">Geotalea uraniireducens (strain Rf4)</name>
    <name type="common">Geobacter uraniireducens</name>
    <dbReference type="NCBI Taxonomy" id="351605"/>
    <lineage>
        <taxon>Bacteria</taxon>
        <taxon>Pseudomonadati</taxon>
        <taxon>Thermodesulfobacteriota</taxon>
        <taxon>Desulfuromonadia</taxon>
        <taxon>Geobacterales</taxon>
        <taxon>Geobacteraceae</taxon>
        <taxon>Geotalea</taxon>
    </lineage>
</organism>
<evidence type="ECO:0000255" key="1">
    <source>
        <dbReference type="HAMAP-Rule" id="MF_00639"/>
    </source>
</evidence>
<accession>A5G8K2</accession>
<name>MURD_GEOUR</name>
<proteinExistence type="inferred from homology"/>
<sequence length="453" mass="49095">MELLNKKILVVGLARTGVAVARFLAARGARVTVTDMKDEAALAPLMEQLADLDIDYELGRHERHSFLMADLVVVSPGVPMDIKPLLLAKAQRRTVISEIELAARFLTAPLVAITGTNGKTTTTTLTGEIFAACGFKTFVGGNIGNPLIELVTSGEAVDRVVVELSSFQLEGIIDFRPQVAVLLNITEDHLDRYATYQEYIDAKLRIFENQTSADYAVLNMDDPLVAAYAGKMKARVVPTSQRQELAQGIFYRNGSIVYRWEGREELFATASFRLKGVHNIDNIMAALASTLLMGCDAGQALAALEAFAGLPHRMEFVREVNGVAWYEDSKGTNVGSVVKSLESFDSGITLIAGGKDKGGEYTPLAGLVKERVGHLILIGEAKERMCNALGSLTDTHLADTLEDAVALAHRLTSPGGVVLFSPACSSFDMFKNYEERGECFKSLVRSLDDGAGR</sequence>
<feature type="chain" id="PRO_1000082686" description="UDP-N-acetylmuramoylalanine--D-glutamate ligase">
    <location>
        <begin position="1"/>
        <end position="453"/>
    </location>
</feature>
<feature type="binding site" evidence="1">
    <location>
        <begin position="115"/>
        <end position="121"/>
    </location>
    <ligand>
        <name>ATP</name>
        <dbReference type="ChEBI" id="CHEBI:30616"/>
    </ligand>
</feature>
<gene>
    <name evidence="1" type="primary">murD</name>
    <name type="ordered locus">Gura_3976</name>
</gene>
<reference key="1">
    <citation type="submission" date="2007-05" db="EMBL/GenBank/DDBJ databases">
        <title>Complete sequence of Geobacter uraniireducens Rf4.</title>
        <authorList>
            <consortium name="US DOE Joint Genome Institute"/>
            <person name="Copeland A."/>
            <person name="Lucas S."/>
            <person name="Lapidus A."/>
            <person name="Barry K."/>
            <person name="Detter J.C."/>
            <person name="Glavina del Rio T."/>
            <person name="Hammon N."/>
            <person name="Israni S."/>
            <person name="Dalin E."/>
            <person name="Tice H."/>
            <person name="Pitluck S."/>
            <person name="Chertkov O."/>
            <person name="Brettin T."/>
            <person name="Bruce D."/>
            <person name="Han C."/>
            <person name="Schmutz J."/>
            <person name="Larimer F."/>
            <person name="Land M."/>
            <person name="Hauser L."/>
            <person name="Kyrpides N."/>
            <person name="Mikhailova N."/>
            <person name="Shelobolina E."/>
            <person name="Aklujkar M."/>
            <person name="Lovley D."/>
            <person name="Richardson P."/>
        </authorList>
    </citation>
    <scope>NUCLEOTIDE SEQUENCE [LARGE SCALE GENOMIC DNA]</scope>
    <source>
        <strain>ATCC BAA-1134 / JCM 13001 / Rf4</strain>
    </source>
</reference>
<protein>
    <recommendedName>
        <fullName evidence="1">UDP-N-acetylmuramoylalanine--D-glutamate ligase</fullName>
        <ecNumber evidence="1">6.3.2.9</ecNumber>
    </recommendedName>
    <alternativeName>
        <fullName evidence="1">D-glutamic acid-adding enzyme</fullName>
    </alternativeName>
    <alternativeName>
        <fullName evidence="1">UDP-N-acetylmuramoyl-L-alanyl-D-glutamate synthetase</fullName>
    </alternativeName>
</protein>